<reference key="1">
    <citation type="journal article" date="2001" name="Nature">
        <title>Massive gene decay in the leprosy bacillus.</title>
        <authorList>
            <person name="Cole S.T."/>
            <person name="Eiglmeier K."/>
            <person name="Parkhill J."/>
            <person name="James K.D."/>
            <person name="Thomson N.R."/>
            <person name="Wheeler P.R."/>
            <person name="Honore N."/>
            <person name="Garnier T."/>
            <person name="Churcher C.M."/>
            <person name="Harris D.E."/>
            <person name="Mungall K.L."/>
            <person name="Basham D."/>
            <person name="Brown D."/>
            <person name="Chillingworth T."/>
            <person name="Connor R."/>
            <person name="Davies R.M."/>
            <person name="Devlin K."/>
            <person name="Duthoy S."/>
            <person name="Feltwell T."/>
            <person name="Fraser A."/>
            <person name="Hamlin N."/>
            <person name="Holroyd S."/>
            <person name="Hornsby T."/>
            <person name="Jagels K."/>
            <person name="Lacroix C."/>
            <person name="Maclean J."/>
            <person name="Moule S."/>
            <person name="Murphy L.D."/>
            <person name="Oliver K."/>
            <person name="Quail M.A."/>
            <person name="Rajandream M.A."/>
            <person name="Rutherford K.M."/>
            <person name="Rutter S."/>
            <person name="Seeger K."/>
            <person name="Simon S."/>
            <person name="Simmonds M."/>
            <person name="Skelton J."/>
            <person name="Squares R."/>
            <person name="Squares S."/>
            <person name="Stevens K."/>
            <person name="Taylor K."/>
            <person name="Whitehead S."/>
            <person name="Woodward J.R."/>
            <person name="Barrell B.G."/>
        </authorList>
    </citation>
    <scope>NUCLEOTIDE SEQUENCE [LARGE SCALE GENOMIC DNA]</scope>
    <source>
        <strain>TN</strain>
    </source>
</reference>
<organism>
    <name type="scientific">Mycobacterium leprae (strain TN)</name>
    <dbReference type="NCBI Taxonomy" id="272631"/>
    <lineage>
        <taxon>Bacteria</taxon>
        <taxon>Bacillati</taxon>
        <taxon>Actinomycetota</taxon>
        <taxon>Actinomycetes</taxon>
        <taxon>Mycobacteriales</taxon>
        <taxon>Mycobacteriaceae</taxon>
        <taxon>Mycobacterium</taxon>
    </lineage>
</organism>
<name>RPOA_MYCLE</name>
<sequence>MLISQRPTLSEDILTDNRSQFVIEPLEPGFGYTLGNSLRRTLLSSIPGAAVTSIRIDGVLHEFTTVPGVKEDVTEIILNLKGLVVSSEEDEPVTMYLRKQGPGEVTAGDIVPPAGVTLHNPGMRIATLNDKGKIEAELVVERGRGYVPAVQNRALGAEIGRIPVDSIYSPVLKVTYKVDATRVEQRTDFDKLILDVETKSSITPRDALASAGKTLVELFGLARELNVEAEGIEIGPSPAEADHIASFALPIDDLDLTVRSYNCLKREGVHTVGELVSRTESDLLDIRNFGQKSIDEVKVKLHQLGLSLKDSPDSFDPSEVAGYDVTTGTWSTDGAYDSQDYAETEQL</sequence>
<feature type="chain" id="PRO_0000175337" description="DNA-directed RNA polymerase subunit alpha">
    <location>
        <begin position="1"/>
        <end position="347"/>
    </location>
</feature>
<feature type="region of interest" description="Alpha N-terminal domain (alpha-NTD)" evidence="1">
    <location>
        <begin position="1"/>
        <end position="226"/>
    </location>
</feature>
<feature type="region of interest" description="Alpha C-terminal domain (alpha-CTD)" evidence="1">
    <location>
        <begin position="243"/>
        <end position="347"/>
    </location>
</feature>
<feature type="region of interest" description="Disordered" evidence="2">
    <location>
        <begin position="326"/>
        <end position="347"/>
    </location>
</feature>
<proteinExistence type="inferred from homology"/>
<gene>
    <name evidence="1" type="primary">rpoA</name>
    <name type="ordered locus">ML1957</name>
    <name type="ORF">MLCB1222.27c</name>
</gene>
<comment type="function">
    <text evidence="1">DNA-dependent RNA polymerase catalyzes the transcription of DNA into RNA using the four ribonucleoside triphosphates as substrates.</text>
</comment>
<comment type="catalytic activity">
    <reaction evidence="1">
        <text>RNA(n) + a ribonucleoside 5'-triphosphate = RNA(n+1) + diphosphate</text>
        <dbReference type="Rhea" id="RHEA:21248"/>
        <dbReference type="Rhea" id="RHEA-COMP:14527"/>
        <dbReference type="Rhea" id="RHEA-COMP:17342"/>
        <dbReference type="ChEBI" id="CHEBI:33019"/>
        <dbReference type="ChEBI" id="CHEBI:61557"/>
        <dbReference type="ChEBI" id="CHEBI:140395"/>
        <dbReference type="EC" id="2.7.7.6"/>
    </reaction>
</comment>
<comment type="subunit">
    <text evidence="1">Homodimer. The RNAP catalytic core consists of 2 alpha, 1 beta, 1 beta' and 1 omega subunit. When a sigma factor is associated with the core the holoenzyme is formed, which can initiate transcription.</text>
</comment>
<comment type="domain">
    <text evidence="1">The N-terminal domain is essential for RNAP assembly and basal transcription, whereas the C-terminal domain is involved in interaction with transcriptional regulators and with upstream promoter elements.</text>
</comment>
<comment type="similarity">
    <text evidence="1">Belongs to the RNA polymerase alpha chain family.</text>
</comment>
<evidence type="ECO:0000255" key="1">
    <source>
        <dbReference type="HAMAP-Rule" id="MF_00059"/>
    </source>
</evidence>
<evidence type="ECO:0000256" key="2">
    <source>
        <dbReference type="SAM" id="MobiDB-lite"/>
    </source>
</evidence>
<keyword id="KW-0240">DNA-directed RNA polymerase</keyword>
<keyword id="KW-0548">Nucleotidyltransferase</keyword>
<keyword id="KW-1185">Reference proteome</keyword>
<keyword id="KW-0804">Transcription</keyword>
<keyword id="KW-0808">Transferase</keyword>
<protein>
    <recommendedName>
        <fullName evidence="1">DNA-directed RNA polymerase subunit alpha</fullName>
        <shortName evidence="1">RNAP subunit alpha</shortName>
        <ecNumber evidence="1">2.7.7.6</ecNumber>
    </recommendedName>
    <alternativeName>
        <fullName evidence="1">RNA polymerase subunit alpha</fullName>
    </alternativeName>
    <alternativeName>
        <fullName evidence="1">Transcriptase subunit alpha</fullName>
    </alternativeName>
</protein>
<accession>Q9X798</accession>
<dbReference type="EC" id="2.7.7.6" evidence="1"/>
<dbReference type="EMBL" id="AL049491">
    <property type="protein sequence ID" value="CAB39833.1"/>
    <property type="molecule type" value="Genomic_DNA"/>
</dbReference>
<dbReference type="EMBL" id="AL583923">
    <property type="protein sequence ID" value="CAC30912.1"/>
    <property type="molecule type" value="Genomic_DNA"/>
</dbReference>
<dbReference type="PIR" id="H87153">
    <property type="entry name" value="H87153"/>
</dbReference>
<dbReference type="RefSeq" id="NP_302322.1">
    <property type="nucleotide sequence ID" value="NC_002677.1"/>
</dbReference>
<dbReference type="RefSeq" id="WP_010908643.1">
    <property type="nucleotide sequence ID" value="NC_002677.1"/>
</dbReference>
<dbReference type="SMR" id="Q9X798"/>
<dbReference type="STRING" id="272631.gene:17575809"/>
<dbReference type="KEGG" id="mle:ML1957"/>
<dbReference type="PATRIC" id="fig|272631.5.peg.3707"/>
<dbReference type="Leproma" id="ML1957"/>
<dbReference type="eggNOG" id="COG0202">
    <property type="taxonomic scope" value="Bacteria"/>
</dbReference>
<dbReference type="HOGENOM" id="CLU_053084_0_1_11"/>
<dbReference type="OrthoDB" id="9805706at2"/>
<dbReference type="Proteomes" id="UP000000806">
    <property type="component" value="Chromosome"/>
</dbReference>
<dbReference type="GO" id="GO:0005737">
    <property type="term" value="C:cytoplasm"/>
    <property type="evidence" value="ECO:0007669"/>
    <property type="project" value="UniProtKB-ARBA"/>
</dbReference>
<dbReference type="GO" id="GO:0000428">
    <property type="term" value="C:DNA-directed RNA polymerase complex"/>
    <property type="evidence" value="ECO:0007669"/>
    <property type="project" value="UniProtKB-KW"/>
</dbReference>
<dbReference type="GO" id="GO:0003677">
    <property type="term" value="F:DNA binding"/>
    <property type="evidence" value="ECO:0007669"/>
    <property type="project" value="UniProtKB-UniRule"/>
</dbReference>
<dbReference type="GO" id="GO:0003899">
    <property type="term" value="F:DNA-directed RNA polymerase activity"/>
    <property type="evidence" value="ECO:0007669"/>
    <property type="project" value="UniProtKB-UniRule"/>
</dbReference>
<dbReference type="GO" id="GO:0046983">
    <property type="term" value="F:protein dimerization activity"/>
    <property type="evidence" value="ECO:0007669"/>
    <property type="project" value="InterPro"/>
</dbReference>
<dbReference type="GO" id="GO:0006351">
    <property type="term" value="P:DNA-templated transcription"/>
    <property type="evidence" value="ECO:0007669"/>
    <property type="project" value="UniProtKB-UniRule"/>
</dbReference>
<dbReference type="CDD" id="cd06928">
    <property type="entry name" value="RNAP_alpha_NTD"/>
    <property type="match status" value="1"/>
</dbReference>
<dbReference type="FunFam" id="1.10.150.20:FF:000001">
    <property type="entry name" value="DNA-directed RNA polymerase subunit alpha"/>
    <property type="match status" value="1"/>
</dbReference>
<dbReference type="FunFam" id="2.170.120.12:FF:000001">
    <property type="entry name" value="DNA-directed RNA polymerase subunit alpha"/>
    <property type="match status" value="1"/>
</dbReference>
<dbReference type="Gene3D" id="1.10.150.20">
    <property type="entry name" value="5' to 3' exonuclease, C-terminal subdomain"/>
    <property type="match status" value="1"/>
</dbReference>
<dbReference type="Gene3D" id="2.170.120.12">
    <property type="entry name" value="DNA-directed RNA polymerase, insert domain"/>
    <property type="match status" value="1"/>
</dbReference>
<dbReference type="Gene3D" id="3.30.1360.10">
    <property type="entry name" value="RNA polymerase, RBP11-like subunit"/>
    <property type="match status" value="1"/>
</dbReference>
<dbReference type="HAMAP" id="MF_00059">
    <property type="entry name" value="RNApol_bact_RpoA"/>
    <property type="match status" value="1"/>
</dbReference>
<dbReference type="InterPro" id="IPR011262">
    <property type="entry name" value="DNA-dir_RNA_pol_insert"/>
</dbReference>
<dbReference type="InterPro" id="IPR011263">
    <property type="entry name" value="DNA-dir_RNA_pol_RpoA/D/Rpb3"/>
</dbReference>
<dbReference type="InterPro" id="IPR011773">
    <property type="entry name" value="DNA-dir_RpoA"/>
</dbReference>
<dbReference type="InterPro" id="IPR036603">
    <property type="entry name" value="RBP11-like"/>
</dbReference>
<dbReference type="InterPro" id="IPR011260">
    <property type="entry name" value="RNAP_asu_C"/>
</dbReference>
<dbReference type="InterPro" id="IPR036643">
    <property type="entry name" value="RNApol_insert_sf"/>
</dbReference>
<dbReference type="NCBIfam" id="NF003513">
    <property type="entry name" value="PRK05182.1-2"/>
    <property type="match status" value="1"/>
</dbReference>
<dbReference type="NCBIfam" id="NF003514">
    <property type="entry name" value="PRK05182.1-4"/>
    <property type="match status" value="1"/>
</dbReference>
<dbReference type="NCBIfam" id="NF003519">
    <property type="entry name" value="PRK05182.2-5"/>
    <property type="match status" value="1"/>
</dbReference>
<dbReference type="NCBIfam" id="TIGR02027">
    <property type="entry name" value="rpoA"/>
    <property type="match status" value="1"/>
</dbReference>
<dbReference type="Pfam" id="PF01000">
    <property type="entry name" value="RNA_pol_A_bac"/>
    <property type="match status" value="1"/>
</dbReference>
<dbReference type="Pfam" id="PF03118">
    <property type="entry name" value="RNA_pol_A_CTD"/>
    <property type="match status" value="1"/>
</dbReference>
<dbReference type="Pfam" id="PF01193">
    <property type="entry name" value="RNA_pol_L"/>
    <property type="match status" value="1"/>
</dbReference>
<dbReference type="SMART" id="SM00662">
    <property type="entry name" value="RPOLD"/>
    <property type="match status" value="1"/>
</dbReference>
<dbReference type="SUPFAM" id="SSF47789">
    <property type="entry name" value="C-terminal domain of RNA polymerase alpha subunit"/>
    <property type="match status" value="1"/>
</dbReference>
<dbReference type="SUPFAM" id="SSF56553">
    <property type="entry name" value="Insert subdomain of RNA polymerase alpha subunit"/>
    <property type="match status" value="1"/>
</dbReference>
<dbReference type="SUPFAM" id="SSF55257">
    <property type="entry name" value="RBP11-like subunits of RNA polymerase"/>
    <property type="match status" value="1"/>
</dbReference>